<evidence type="ECO:0000250" key="1">
    <source>
        <dbReference type="UniProtKB" id="P50389"/>
    </source>
</evidence>
<evidence type="ECO:0000255" key="2">
    <source>
        <dbReference type="HAMAP-Rule" id="MF_01627"/>
    </source>
</evidence>
<reference key="1">
    <citation type="submission" date="2002-12" db="EMBL/GenBank/DDBJ databases">
        <title>Complete genome sequence of Vibrio vulnificus CMCP6.</title>
        <authorList>
            <person name="Rhee J.H."/>
            <person name="Kim S.Y."/>
            <person name="Chung S.S."/>
            <person name="Kim J.J."/>
            <person name="Moon Y.H."/>
            <person name="Jeong H."/>
            <person name="Choy H.E."/>
        </authorList>
    </citation>
    <scope>NUCLEOTIDE SEQUENCE [LARGE SCALE GENOMIC DNA]</scope>
    <source>
        <strain>CMCP6</strain>
    </source>
</reference>
<comment type="function">
    <text evidence="2">Catalyzes the reversible phosphorolytic breakdown of the N-glycosidic bond in the beta-(deoxy)ribonucleoside molecules, with the formation of the corresponding free purine bases and pentose-1-phosphate.</text>
</comment>
<comment type="catalytic activity">
    <reaction evidence="2">
        <text>a purine D-ribonucleoside + phosphate = a purine nucleobase + alpha-D-ribose 1-phosphate</text>
        <dbReference type="Rhea" id="RHEA:19805"/>
        <dbReference type="ChEBI" id="CHEBI:26386"/>
        <dbReference type="ChEBI" id="CHEBI:43474"/>
        <dbReference type="ChEBI" id="CHEBI:57720"/>
        <dbReference type="ChEBI" id="CHEBI:142355"/>
        <dbReference type="EC" id="2.4.2.1"/>
    </reaction>
</comment>
<comment type="catalytic activity">
    <reaction evidence="2">
        <text>a purine 2'-deoxy-D-ribonucleoside + phosphate = a purine nucleobase + 2-deoxy-alpha-D-ribose 1-phosphate</text>
        <dbReference type="Rhea" id="RHEA:36431"/>
        <dbReference type="ChEBI" id="CHEBI:26386"/>
        <dbReference type="ChEBI" id="CHEBI:43474"/>
        <dbReference type="ChEBI" id="CHEBI:57259"/>
        <dbReference type="ChEBI" id="CHEBI:142361"/>
        <dbReference type="EC" id="2.4.2.1"/>
    </reaction>
</comment>
<comment type="subunit">
    <text evidence="2">Homohexamer; trimer of homodimers.</text>
</comment>
<comment type="similarity">
    <text evidence="2">Belongs to the PNP/UDP phosphorylase family.</text>
</comment>
<feature type="chain" id="PRO_0000063176" description="Purine nucleoside phosphorylase DeoD-type 1">
    <location>
        <begin position="1"/>
        <end position="239"/>
    </location>
</feature>
<feature type="active site" description="Proton donor" evidence="2">
    <location>
        <position position="205"/>
    </location>
</feature>
<feature type="binding site" evidence="1">
    <location>
        <position position="5"/>
    </location>
    <ligand>
        <name>a purine D-ribonucleoside</name>
        <dbReference type="ChEBI" id="CHEBI:142355"/>
        <note>ligand shared between dimeric partners</note>
    </ligand>
</feature>
<feature type="binding site" description="in other chain" evidence="1">
    <location>
        <position position="21"/>
    </location>
    <ligand>
        <name>phosphate</name>
        <dbReference type="ChEBI" id="CHEBI:43474"/>
        <note>ligand shared between dimeric partners</note>
    </ligand>
</feature>
<feature type="binding site" description="in other chain" evidence="1">
    <location>
        <position position="25"/>
    </location>
    <ligand>
        <name>phosphate</name>
        <dbReference type="ChEBI" id="CHEBI:43474"/>
        <note>ligand shared between dimeric partners</note>
    </ligand>
</feature>
<feature type="binding site" evidence="1">
    <location>
        <position position="44"/>
    </location>
    <ligand>
        <name>phosphate</name>
        <dbReference type="ChEBI" id="CHEBI:43474"/>
        <note>ligand shared between dimeric partners</note>
    </ligand>
</feature>
<feature type="binding site" description="in other chain" evidence="1">
    <location>
        <begin position="88"/>
        <end position="91"/>
    </location>
    <ligand>
        <name>phosphate</name>
        <dbReference type="ChEBI" id="CHEBI:43474"/>
        <note>ligand shared between dimeric partners</note>
    </ligand>
</feature>
<feature type="binding site" description="in other chain" evidence="1">
    <location>
        <begin position="180"/>
        <end position="182"/>
    </location>
    <ligand>
        <name>a purine D-ribonucleoside</name>
        <dbReference type="ChEBI" id="CHEBI:142355"/>
        <note>ligand shared between dimeric partners</note>
    </ligand>
</feature>
<feature type="binding site" description="in other chain" evidence="1">
    <location>
        <begin position="204"/>
        <end position="205"/>
    </location>
    <ligand>
        <name>a purine D-ribonucleoside</name>
        <dbReference type="ChEBI" id="CHEBI:142355"/>
        <note>ligand shared between dimeric partners</note>
    </ligand>
</feature>
<feature type="site" description="Important for catalytic activity" evidence="2">
    <location>
        <position position="218"/>
    </location>
</feature>
<name>DEOD1_VIBVU</name>
<gene>
    <name evidence="2" type="primary">deoD1</name>
    <name type="ordered locus">VV1_1728</name>
</gene>
<keyword id="KW-0328">Glycosyltransferase</keyword>
<keyword id="KW-0808">Transferase</keyword>
<dbReference type="EC" id="2.4.2.1" evidence="2"/>
<dbReference type="EMBL" id="AE016795">
    <property type="protein sequence ID" value="AAO10143.1"/>
    <property type="molecule type" value="Genomic_DNA"/>
</dbReference>
<dbReference type="SMR" id="Q8DBS9"/>
<dbReference type="KEGG" id="vvu:VV1_1728"/>
<dbReference type="HOGENOM" id="CLU_068457_2_0_6"/>
<dbReference type="Proteomes" id="UP000002275">
    <property type="component" value="Chromosome 1"/>
</dbReference>
<dbReference type="GO" id="GO:0005829">
    <property type="term" value="C:cytosol"/>
    <property type="evidence" value="ECO:0007669"/>
    <property type="project" value="TreeGrafter"/>
</dbReference>
<dbReference type="GO" id="GO:0004731">
    <property type="term" value="F:purine-nucleoside phosphorylase activity"/>
    <property type="evidence" value="ECO:0007669"/>
    <property type="project" value="UniProtKB-UniRule"/>
</dbReference>
<dbReference type="GO" id="GO:0006152">
    <property type="term" value="P:purine nucleoside catabolic process"/>
    <property type="evidence" value="ECO:0007669"/>
    <property type="project" value="TreeGrafter"/>
</dbReference>
<dbReference type="CDD" id="cd09006">
    <property type="entry name" value="PNP_EcPNPI-like"/>
    <property type="match status" value="1"/>
</dbReference>
<dbReference type="FunFam" id="3.40.50.1580:FF:000002">
    <property type="entry name" value="Purine nucleoside phosphorylase DeoD-type"/>
    <property type="match status" value="1"/>
</dbReference>
<dbReference type="Gene3D" id="3.40.50.1580">
    <property type="entry name" value="Nucleoside phosphorylase domain"/>
    <property type="match status" value="1"/>
</dbReference>
<dbReference type="HAMAP" id="MF_01627">
    <property type="entry name" value="Pur_nucleosid_phosp"/>
    <property type="match status" value="1"/>
</dbReference>
<dbReference type="InterPro" id="IPR004402">
    <property type="entry name" value="DeoD-type"/>
</dbReference>
<dbReference type="InterPro" id="IPR018016">
    <property type="entry name" value="Nucleoside_phosphorylase_CS"/>
</dbReference>
<dbReference type="InterPro" id="IPR000845">
    <property type="entry name" value="Nucleoside_phosphorylase_d"/>
</dbReference>
<dbReference type="InterPro" id="IPR035994">
    <property type="entry name" value="Nucleoside_phosphorylase_sf"/>
</dbReference>
<dbReference type="NCBIfam" id="TIGR00107">
    <property type="entry name" value="deoD"/>
    <property type="match status" value="1"/>
</dbReference>
<dbReference type="NCBIfam" id="NF004489">
    <property type="entry name" value="PRK05819.1"/>
    <property type="match status" value="1"/>
</dbReference>
<dbReference type="NCBIfam" id="NF009914">
    <property type="entry name" value="PRK13374.1"/>
    <property type="match status" value="1"/>
</dbReference>
<dbReference type="PANTHER" id="PTHR43691:SF2">
    <property type="entry name" value="PURINE NUCLEOSIDE PHOSPHORYLASE DEOD-TYPE"/>
    <property type="match status" value="1"/>
</dbReference>
<dbReference type="PANTHER" id="PTHR43691">
    <property type="entry name" value="URIDINE PHOSPHORYLASE"/>
    <property type="match status" value="1"/>
</dbReference>
<dbReference type="Pfam" id="PF01048">
    <property type="entry name" value="PNP_UDP_1"/>
    <property type="match status" value="1"/>
</dbReference>
<dbReference type="SUPFAM" id="SSF53167">
    <property type="entry name" value="Purine and uridine phosphorylases"/>
    <property type="match status" value="1"/>
</dbReference>
<dbReference type="PROSITE" id="PS01232">
    <property type="entry name" value="PNP_UDP_1"/>
    <property type="match status" value="1"/>
</dbReference>
<accession>Q8DBS9</accession>
<sequence length="239" mass="25885">MATPHINAEMGDFADVVLMPGDPLRAKYIAETFLEDVVQVCDVRNMYGFTGTYKGRKVSVMGHGMGIPSCSIYATELIKDYGVKKIIRVGSCGAVSTDIKVRDVVIGMGACTDSKVNRIRFKGHDFAAIADYKMVKAAEEAAKARGIDVKVGNLFSAELFYTPDPEMFDVMDKYGIVGVEMEAAGIYGVAAEYGAKALTICTVSDHIKTGEQTTSEERQNTFNDMMIVALDSVLLGDAE</sequence>
<proteinExistence type="inferred from homology"/>
<protein>
    <recommendedName>
        <fullName evidence="2">Purine nucleoside phosphorylase DeoD-type 1</fullName>
        <shortName evidence="2">PNP 1</shortName>
        <ecNumber evidence="2">2.4.2.1</ecNumber>
    </recommendedName>
</protein>
<organism>
    <name type="scientific">Vibrio vulnificus (strain CMCP6)</name>
    <dbReference type="NCBI Taxonomy" id="216895"/>
    <lineage>
        <taxon>Bacteria</taxon>
        <taxon>Pseudomonadati</taxon>
        <taxon>Pseudomonadota</taxon>
        <taxon>Gammaproteobacteria</taxon>
        <taxon>Vibrionales</taxon>
        <taxon>Vibrionaceae</taxon>
        <taxon>Vibrio</taxon>
    </lineage>
</organism>